<feature type="chain" id="PRO_0000359501" description="Alkyl hydroperoxide reductase AhpD">
    <location>
        <begin position="1"/>
        <end position="178"/>
    </location>
</feature>
<feature type="active site" description="Proton donor" evidence="2">
    <location>
        <position position="130"/>
    </location>
</feature>
<feature type="active site" description="Cysteine sulfenic acid (-SOH) intermediate" evidence="2">
    <location>
        <position position="133"/>
    </location>
</feature>
<feature type="disulfide bond" evidence="1">
    <location>
        <begin position="130"/>
        <end position="133"/>
    </location>
</feature>
<feature type="disulfide bond" description="Interchain (with AhpC); in linked form" evidence="2">
    <location>
        <position position="133"/>
    </location>
</feature>
<accession>A0PSD4</accession>
<comment type="function">
    <text evidence="2">Antioxidant protein with alkyl hydroperoxidase activity. Required for the reduction of the AhpC active site cysteine residues and for the regeneration of the AhpC enzyme activity.</text>
</comment>
<comment type="catalytic activity">
    <reaction evidence="2">
        <text>N(6)-[(R)-dihydrolipoyl]-L-lysyl-[lipoyl-carrier protein] + a hydroperoxide = N(6)-[(R)-lipoyl]-L-lysyl-[lipoyl-carrier protein] + an alcohol + H2O</text>
        <dbReference type="Rhea" id="RHEA:62636"/>
        <dbReference type="Rhea" id="RHEA-COMP:10502"/>
        <dbReference type="Rhea" id="RHEA-COMP:16355"/>
        <dbReference type="ChEBI" id="CHEBI:15377"/>
        <dbReference type="ChEBI" id="CHEBI:30879"/>
        <dbReference type="ChEBI" id="CHEBI:35924"/>
        <dbReference type="ChEBI" id="CHEBI:83099"/>
        <dbReference type="ChEBI" id="CHEBI:83100"/>
        <dbReference type="EC" id="1.11.1.28"/>
    </reaction>
</comment>
<comment type="subunit">
    <text evidence="2">Homotrimer.</text>
</comment>
<comment type="similarity">
    <text evidence="2">Belongs to the AhpD family.</text>
</comment>
<proteinExistence type="inferred from homology"/>
<organism>
    <name type="scientific">Mycobacterium ulcerans (strain Agy99)</name>
    <dbReference type="NCBI Taxonomy" id="362242"/>
    <lineage>
        <taxon>Bacteria</taxon>
        <taxon>Bacillati</taxon>
        <taxon>Actinomycetota</taxon>
        <taxon>Actinomycetes</taxon>
        <taxon>Mycobacteriales</taxon>
        <taxon>Mycobacteriaceae</taxon>
        <taxon>Mycobacterium</taxon>
        <taxon>Mycobacterium ulcerans group</taxon>
    </lineage>
</organism>
<dbReference type="EC" id="1.11.1.28" evidence="2"/>
<dbReference type="EMBL" id="CP000325">
    <property type="protein sequence ID" value="ABL05253.1"/>
    <property type="molecule type" value="Genomic_DNA"/>
</dbReference>
<dbReference type="RefSeq" id="WP_011740865.1">
    <property type="nucleotide sequence ID" value="NC_008611.1"/>
</dbReference>
<dbReference type="SMR" id="A0PSD4"/>
<dbReference type="PeroxiBase" id="4580">
    <property type="entry name" value="MuAhpD"/>
</dbReference>
<dbReference type="KEGG" id="mul:MUL_3000"/>
<dbReference type="eggNOG" id="COG0599">
    <property type="taxonomic scope" value="Bacteria"/>
</dbReference>
<dbReference type="HOGENOM" id="CLU_105328_0_0_11"/>
<dbReference type="Proteomes" id="UP000000765">
    <property type="component" value="Chromosome"/>
</dbReference>
<dbReference type="GO" id="GO:0008785">
    <property type="term" value="F:alkyl hydroperoxide reductase activity"/>
    <property type="evidence" value="ECO:0007669"/>
    <property type="project" value="UniProtKB-UniRule"/>
</dbReference>
<dbReference type="GO" id="GO:0015036">
    <property type="term" value="F:disulfide oxidoreductase activity"/>
    <property type="evidence" value="ECO:0007669"/>
    <property type="project" value="TreeGrafter"/>
</dbReference>
<dbReference type="GO" id="GO:0032843">
    <property type="term" value="F:hydroperoxide reductase activity"/>
    <property type="evidence" value="ECO:0007669"/>
    <property type="project" value="InterPro"/>
</dbReference>
<dbReference type="GO" id="GO:0051920">
    <property type="term" value="F:peroxiredoxin activity"/>
    <property type="evidence" value="ECO:0007669"/>
    <property type="project" value="InterPro"/>
</dbReference>
<dbReference type="GO" id="GO:0045454">
    <property type="term" value="P:cell redox homeostasis"/>
    <property type="evidence" value="ECO:0007669"/>
    <property type="project" value="TreeGrafter"/>
</dbReference>
<dbReference type="GO" id="GO:0006979">
    <property type="term" value="P:response to oxidative stress"/>
    <property type="evidence" value="ECO:0007669"/>
    <property type="project" value="InterPro"/>
</dbReference>
<dbReference type="Gene3D" id="1.20.1290.10">
    <property type="entry name" value="AhpD-like"/>
    <property type="match status" value="1"/>
</dbReference>
<dbReference type="HAMAP" id="MF_01676">
    <property type="entry name" value="AhpD"/>
    <property type="match status" value="1"/>
</dbReference>
<dbReference type="InterPro" id="IPR004674">
    <property type="entry name" value="AhpD"/>
</dbReference>
<dbReference type="InterPro" id="IPR029032">
    <property type="entry name" value="AhpD-like"/>
</dbReference>
<dbReference type="InterPro" id="IPR004675">
    <property type="entry name" value="AhpD_core"/>
</dbReference>
<dbReference type="InterPro" id="IPR003779">
    <property type="entry name" value="CMD-like"/>
</dbReference>
<dbReference type="NCBIfam" id="TIGR00777">
    <property type="entry name" value="ahpD"/>
    <property type="match status" value="1"/>
</dbReference>
<dbReference type="NCBIfam" id="TIGR00778">
    <property type="entry name" value="ahpD_dom"/>
    <property type="match status" value="1"/>
</dbReference>
<dbReference type="PANTHER" id="PTHR33930">
    <property type="entry name" value="ALKYL HYDROPEROXIDE REDUCTASE AHPD"/>
    <property type="match status" value="1"/>
</dbReference>
<dbReference type="PANTHER" id="PTHR33930:SF7">
    <property type="entry name" value="ALKYL HYDROPEROXIDE REDUCTASE AHPD"/>
    <property type="match status" value="1"/>
</dbReference>
<dbReference type="Pfam" id="PF02627">
    <property type="entry name" value="CMD"/>
    <property type="match status" value="1"/>
</dbReference>
<dbReference type="SUPFAM" id="SSF69118">
    <property type="entry name" value="AhpD-like"/>
    <property type="match status" value="1"/>
</dbReference>
<evidence type="ECO:0000250" key="1"/>
<evidence type="ECO:0000255" key="2">
    <source>
        <dbReference type="HAMAP-Rule" id="MF_01676"/>
    </source>
</evidence>
<keyword id="KW-0049">Antioxidant</keyword>
<keyword id="KW-1015">Disulfide bond</keyword>
<keyword id="KW-0560">Oxidoreductase</keyword>
<keyword id="KW-0575">Peroxidase</keyword>
<keyword id="KW-0676">Redox-active center</keyword>
<protein>
    <recommendedName>
        <fullName evidence="2">Alkyl hydroperoxide reductase AhpD</fullName>
        <ecNumber evidence="2">1.11.1.28</ecNumber>
    </recommendedName>
    <alternativeName>
        <fullName evidence="2">Alkylhydroperoxidase AhpD</fullName>
    </alternativeName>
</protein>
<reference key="1">
    <citation type="journal article" date="2007" name="Genome Res.">
        <title>Reductive evolution and niche adaptation inferred from the genome of Mycobacterium ulcerans, the causative agent of Buruli ulcer.</title>
        <authorList>
            <person name="Stinear T.P."/>
            <person name="Seemann T."/>
            <person name="Pidot S."/>
            <person name="Frigui W."/>
            <person name="Reysset G."/>
            <person name="Garnier T."/>
            <person name="Meurice G."/>
            <person name="Simon D."/>
            <person name="Bouchier C."/>
            <person name="Ma L."/>
            <person name="Tichit M."/>
            <person name="Porter J.L."/>
            <person name="Ryan J."/>
            <person name="Johnson P.D.R."/>
            <person name="Davies J.K."/>
            <person name="Jenkin G.A."/>
            <person name="Small P.L.C."/>
            <person name="Jones L.M."/>
            <person name="Tekaia F."/>
            <person name="Laval F."/>
            <person name="Daffe M."/>
            <person name="Parkhill J."/>
            <person name="Cole S.T."/>
        </authorList>
    </citation>
    <scope>NUCLEOTIDE SEQUENCE [LARGE SCALE GENOMIC DNA]</scope>
    <source>
        <strain>Agy99</strain>
    </source>
</reference>
<sequence>MSIENLKAALPEYAKDLKLNLGSISRTTVLDEEQLWGTLLASAAATRNAQVLAEIGAEAADNLSAQAYQAALGAVSIMGMNNVFYRGRGFLEGQYDDLRAGLRMNIIANPGVDKANFELWSFAVSSVNGCSHCVVAHEHTLREAGVGREAVFEALKAAAIVCGVAQALTAAQTLAAVG</sequence>
<name>AHPD_MYCUA</name>
<gene>
    <name evidence="2" type="primary">ahpD</name>
    <name type="ordered locus">MUL_3000</name>
</gene>